<sequence>ADGGTHDARIALMKKIGGATGALGAIAKGEKPYDAEIVKASLTTIAETAKAFPDQFNPKDSTDAEVNPKIWDNLDDFKAKAAKLSTDAETALAQLPADQAGVGNTLKTLGGNCGACHQAYRIKKD</sequence>
<reference key="1">
    <citation type="journal article" date="1983" name="Eur. J. Biochem.">
        <title>The amino acid sequence of cytochrome c-556 from Agrobacterium tumefaciens strain Apple 185.</title>
        <authorList>
            <person name="Tempst P."/>
            <person name="van Beeumen J."/>
        </authorList>
    </citation>
    <scope>PROTEIN SEQUENCE</scope>
</reference>
<evidence type="ECO:0000250" key="1">
    <source>
        <dbReference type="UniProtKB" id="P00150"/>
    </source>
</evidence>
<organism>
    <name type="scientific">Agrobacterium tumefaciens (strain apple 185)</name>
    <dbReference type="NCBI Taxonomy" id="370"/>
    <lineage>
        <taxon>Bacteria</taxon>
        <taxon>Pseudomonadati</taxon>
        <taxon>Pseudomonadota</taxon>
        <taxon>Alphaproteobacteria</taxon>
        <taxon>Hyphomicrobiales</taxon>
        <taxon>Rhizobiaceae</taxon>
        <taxon>Rhizobium/Agrobacterium group</taxon>
        <taxon>Agrobacterium</taxon>
        <taxon>Agrobacterium tumefaciens complex</taxon>
    </lineage>
</organism>
<proteinExistence type="evidence at protein level"/>
<name>C556_AGRTA</name>
<keyword id="KW-0903">Direct protein sequencing</keyword>
<keyword id="KW-0249">Electron transport</keyword>
<keyword id="KW-0349">Heme</keyword>
<keyword id="KW-0408">Iron</keyword>
<keyword id="KW-0479">Metal-binding</keyword>
<keyword id="KW-0813">Transport</keyword>
<dbReference type="PIR" id="A00134">
    <property type="entry name" value="CCAGA6"/>
</dbReference>
<dbReference type="SMR" id="P00141"/>
<dbReference type="GO" id="GO:0042597">
    <property type="term" value="C:periplasmic space"/>
    <property type="evidence" value="ECO:0007669"/>
    <property type="project" value="InterPro"/>
</dbReference>
<dbReference type="GO" id="GO:0009055">
    <property type="term" value="F:electron transfer activity"/>
    <property type="evidence" value="ECO:0007669"/>
    <property type="project" value="InterPro"/>
</dbReference>
<dbReference type="GO" id="GO:0020037">
    <property type="term" value="F:heme binding"/>
    <property type="evidence" value="ECO:0007669"/>
    <property type="project" value="InterPro"/>
</dbReference>
<dbReference type="GO" id="GO:0005506">
    <property type="term" value="F:iron ion binding"/>
    <property type="evidence" value="ECO:0007669"/>
    <property type="project" value="InterPro"/>
</dbReference>
<dbReference type="GO" id="GO:0022900">
    <property type="term" value="P:electron transport chain"/>
    <property type="evidence" value="ECO:0007669"/>
    <property type="project" value="InterPro"/>
</dbReference>
<dbReference type="Gene3D" id="1.20.120.10">
    <property type="entry name" value="Cytochrome c/b562"/>
    <property type="match status" value="1"/>
</dbReference>
<dbReference type="InterPro" id="IPR010980">
    <property type="entry name" value="Cyt_c/b562"/>
</dbReference>
<dbReference type="InterPro" id="IPR002321">
    <property type="entry name" value="Cyt_c_II"/>
</dbReference>
<dbReference type="InterPro" id="IPR012127">
    <property type="entry name" value="Cyt_c_prime"/>
</dbReference>
<dbReference type="InterPro" id="IPR015984">
    <property type="entry name" value="Cyt_c_prime_subgr"/>
</dbReference>
<dbReference type="Pfam" id="PF01322">
    <property type="entry name" value="Cytochrom_C_2"/>
    <property type="match status" value="1"/>
</dbReference>
<dbReference type="PIRSF" id="PIRSF000027">
    <property type="entry name" value="Cytc_c_prime"/>
    <property type="match status" value="1"/>
</dbReference>
<dbReference type="PRINTS" id="PR00608">
    <property type="entry name" value="CYTCHROMECII"/>
</dbReference>
<dbReference type="SUPFAM" id="SSF47175">
    <property type="entry name" value="Cytochromes"/>
    <property type="match status" value="1"/>
</dbReference>
<dbReference type="PROSITE" id="PS51009">
    <property type="entry name" value="CYTCII"/>
    <property type="match status" value="1"/>
</dbReference>
<comment type="function">
    <text>Low-spin monoheme cytochrome c.</text>
</comment>
<comment type="subunit">
    <text>Monomer.</text>
</comment>
<comment type="PTM">
    <text evidence="1">Binds 1 heme c group covalently per subunit.</text>
</comment>
<protein>
    <recommendedName>
        <fullName>Cytochrome c-556</fullName>
    </recommendedName>
    <alternativeName>
        <fullName>Cytochrome c556</fullName>
    </alternativeName>
</protein>
<feature type="chain" id="PRO_0000108410" description="Cytochrome c-556">
    <location>
        <begin position="1"/>
        <end position="125"/>
    </location>
</feature>
<feature type="binding site" description="axial binding residue">
    <location>
        <position position="13"/>
    </location>
    <ligand>
        <name>heme</name>
        <dbReference type="ChEBI" id="CHEBI:30413"/>
    </ligand>
    <ligandPart>
        <name>Fe</name>
        <dbReference type="ChEBI" id="CHEBI:18248"/>
    </ligandPart>
</feature>
<feature type="binding site" description="axial binding residue" evidence="1">
    <location>
        <position position="13"/>
    </location>
    <ligand>
        <name>heme c</name>
        <dbReference type="ChEBI" id="CHEBI:61717"/>
    </ligand>
    <ligandPart>
        <name>Fe</name>
        <dbReference type="ChEBI" id="CHEBI:18248"/>
    </ligandPart>
</feature>
<feature type="binding site" description="covalent">
    <location>
        <position position="113"/>
    </location>
    <ligand>
        <name>heme</name>
        <dbReference type="ChEBI" id="CHEBI:30413"/>
    </ligand>
</feature>
<feature type="binding site" description="covalent" evidence="1">
    <location>
        <position position="113"/>
    </location>
    <ligand>
        <name>heme c</name>
        <dbReference type="ChEBI" id="CHEBI:61717"/>
    </ligand>
</feature>
<feature type="binding site" description="covalent">
    <location>
        <position position="116"/>
    </location>
    <ligand>
        <name>heme</name>
        <dbReference type="ChEBI" id="CHEBI:30413"/>
    </ligand>
</feature>
<feature type="binding site" description="covalent" evidence="1">
    <location>
        <position position="116"/>
    </location>
    <ligand>
        <name>heme c</name>
        <dbReference type="ChEBI" id="CHEBI:61717"/>
    </ligand>
</feature>
<feature type="binding site" description="axial binding residue">
    <location>
        <position position="117"/>
    </location>
    <ligand>
        <name>heme</name>
        <dbReference type="ChEBI" id="CHEBI:30413"/>
    </ligand>
    <ligandPart>
        <name>Fe</name>
        <dbReference type="ChEBI" id="CHEBI:18248"/>
    </ligandPart>
</feature>
<feature type="binding site" description="axial binding residue" evidence="1">
    <location>
        <position position="117"/>
    </location>
    <ligand>
        <name>heme c</name>
        <dbReference type="ChEBI" id="CHEBI:61717"/>
    </ligand>
    <ligandPart>
        <name>Fe</name>
        <dbReference type="ChEBI" id="CHEBI:18248"/>
    </ligandPart>
</feature>
<accession>P00141</accession>